<proteinExistence type="evidence at protein level"/>
<evidence type="ECO:0000250" key="1">
    <source>
        <dbReference type="UniProtKB" id="Q4VA53"/>
    </source>
</evidence>
<evidence type="ECO:0000250" key="2">
    <source>
        <dbReference type="UniProtKB" id="Q6TRW4"/>
    </source>
</evidence>
<evidence type="ECO:0000255" key="3"/>
<evidence type="ECO:0000256" key="4">
    <source>
        <dbReference type="SAM" id="MobiDB-lite"/>
    </source>
</evidence>
<evidence type="ECO:0000269" key="5">
    <source>
    </source>
</evidence>
<evidence type="ECO:0000269" key="6">
    <source>
    </source>
</evidence>
<evidence type="ECO:0000269" key="7">
    <source>
    </source>
</evidence>
<evidence type="ECO:0000269" key="8">
    <source>
    </source>
</evidence>
<evidence type="ECO:0000269" key="9">
    <source>
    </source>
</evidence>
<evidence type="ECO:0000269" key="10">
    <source>
    </source>
</evidence>
<evidence type="ECO:0000269" key="11">
    <source>
    </source>
</evidence>
<evidence type="ECO:0000269" key="12">
    <source>
    </source>
</evidence>
<evidence type="ECO:0000303" key="13">
    <source>
    </source>
</evidence>
<evidence type="ECO:0000303" key="14">
    <source>
    </source>
</evidence>
<evidence type="ECO:0000303" key="15">
    <source>
    </source>
</evidence>
<evidence type="ECO:0000305" key="16"/>
<evidence type="ECO:0000305" key="17">
    <source>
    </source>
</evidence>
<evidence type="ECO:0000305" key="18">
    <source>
    </source>
</evidence>
<evidence type="ECO:0000305" key="19">
    <source>
    </source>
</evidence>
<evidence type="ECO:0000312" key="20">
    <source>
        <dbReference type="EMBL" id="AAD22134.2"/>
    </source>
</evidence>
<evidence type="ECO:0000312" key="21">
    <source>
        <dbReference type="EMBL" id="AAH39256.1"/>
    </source>
</evidence>
<evidence type="ECO:0000312" key="22">
    <source>
        <dbReference type="EMBL" id="AAH70274.1"/>
    </source>
</evidence>
<evidence type="ECO:0000312" key="23">
    <source>
        <dbReference type="EMBL" id="BAA76823.2"/>
    </source>
</evidence>
<evidence type="ECO:0000312" key="24">
    <source>
        <dbReference type="EMBL" id="BAB15584.1"/>
    </source>
</evidence>
<evidence type="ECO:0000312" key="25">
    <source>
        <dbReference type="EMBL" id="CAB69911.1"/>
    </source>
</evidence>
<evidence type="ECO:0007744" key="26">
    <source>
    </source>
</evidence>
<evidence type="ECO:0007744" key="27">
    <source>
    </source>
</evidence>
<evidence type="ECO:0007744" key="28">
    <source>
    </source>
</evidence>
<evidence type="ECO:0007744" key="29">
    <source>
    </source>
</evidence>
<evidence type="ECO:0007744" key="30">
    <source>
    </source>
</evidence>
<evidence type="ECO:0007744" key="31">
    <source>
    </source>
</evidence>
<evidence type="ECO:0007744" key="32">
    <source>
    </source>
</evidence>
<evidence type="ECO:0007744" key="33">
    <source>
    </source>
</evidence>
<evidence type="ECO:0007744" key="34">
    <source>
    </source>
</evidence>
<evidence type="ECO:0007744" key="35">
    <source>
    </source>
</evidence>
<evidence type="ECO:0007744" key="36">
    <source>
    </source>
</evidence>
<evidence type="ECO:0007829" key="37">
    <source>
        <dbReference type="PDB" id="5HDT"/>
    </source>
</evidence>
<feature type="chain" id="PRO_0000287424" description="Sister chromatid cohesion protein PDS5 homolog B">
    <location>
        <begin position="1"/>
        <end position="1447"/>
    </location>
</feature>
<feature type="repeat" description="HEAT" evidence="3">
    <location>
        <begin position="383"/>
        <end position="419"/>
    </location>
</feature>
<feature type="DNA-binding region" description="A.T hook 1" evidence="3">
    <location>
        <begin position="1249"/>
        <end position="1261"/>
    </location>
</feature>
<feature type="DNA-binding region" description="A.T hook 2" evidence="3">
    <location>
        <begin position="1287"/>
        <end position="1299"/>
    </location>
</feature>
<feature type="DNA-binding region" description="A.T hook 3" evidence="3">
    <location>
        <begin position="1372"/>
        <end position="1384"/>
    </location>
</feature>
<feature type="region of interest" description="Disordered" evidence="4">
    <location>
        <begin position="1117"/>
        <end position="1447"/>
    </location>
</feature>
<feature type="compositionally biased region" description="Polar residues" evidence="4">
    <location>
        <begin position="1137"/>
        <end position="1155"/>
    </location>
</feature>
<feature type="compositionally biased region" description="Low complexity" evidence="4">
    <location>
        <begin position="1156"/>
        <end position="1167"/>
    </location>
</feature>
<feature type="compositionally biased region" description="Basic and acidic residues" evidence="4">
    <location>
        <begin position="1172"/>
        <end position="1184"/>
    </location>
</feature>
<feature type="compositionally biased region" description="Basic and acidic residues" evidence="4">
    <location>
        <begin position="1196"/>
        <end position="1214"/>
    </location>
</feature>
<feature type="compositionally biased region" description="Basic and acidic residues" evidence="4">
    <location>
        <begin position="1225"/>
        <end position="1243"/>
    </location>
</feature>
<feature type="compositionally biased region" description="Basic residues" evidence="4">
    <location>
        <begin position="1245"/>
        <end position="1254"/>
    </location>
</feature>
<feature type="compositionally biased region" description="Basic and acidic residues" evidence="4">
    <location>
        <begin position="1265"/>
        <end position="1274"/>
    </location>
</feature>
<feature type="compositionally biased region" description="Basic residues" evidence="4">
    <location>
        <begin position="1310"/>
        <end position="1319"/>
    </location>
</feature>
<feature type="compositionally biased region" description="Basic residues" evidence="4">
    <location>
        <begin position="1342"/>
        <end position="1353"/>
    </location>
</feature>
<feature type="compositionally biased region" description="Polar residues" evidence="4">
    <location>
        <begin position="1355"/>
        <end position="1372"/>
    </location>
</feature>
<feature type="compositionally biased region" description="Low complexity" evidence="4">
    <location>
        <begin position="1379"/>
        <end position="1388"/>
    </location>
</feature>
<feature type="compositionally biased region" description="Acidic residues" evidence="4">
    <location>
        <begin position="1422"/>
        <end position="1432"/>
    </location>
</feature>
<feature type="compositionally biased region" description="Basic residues" evidence="4">
    <location>
        <begin position="1437"/>
        <end position="1447"/>
    </location>
</feature>
<feature type="modified residue" description="N6-acetyllysine" evidence="31">
    <location>
        <position position="1136"/>
    </location>
</feature>
<feature type="modified residue" description="Phosphoserine" evidence="35">
    <location>
        <position position="1140"/>
    </location>
</feature>
<feature type="modified residue" description="Phosphoserine" evidence="32">
    <location>
        <position position="1162"/>
    </location>
</feature>
<feature type="modified residue" description="Phosphoserine" evidence="32 33 34 35 36">
    <location>
        <position position="1166"/>
    </location>
</feature>
<feature type="modified residue" description="Phosphoserine" evidence="32 35">
    <location>
        <position position="1176"/>
    </location>
</feature>
<feature type="modified residue" description="Phosphoserine" evidence="29 32 33 34 35">
    <location>
        <position position="1182"/>
    </location>
</feature>
<feature type="modified residue" description="Phosphoserine" evidence="32">
    <location>
        <position position="1191"/>
    </location>
</feature>
<feature type="modified residue" description="Phosphothreonine" evidence="35">
    <location>
        <position position="1255"/>
    </location>
</feature>
<feature type="modified residue" description="Phosphoserine" evidence="28 32 35">
    <location>
        <position position="1257"/>
    </location>
</feature>
<feature type="modified residue" description="Phosphoserine" evidence="35">
    <location>
        <position position="1259"/>
    </location>
</feature>
<feature type="modified residue" description="Phosphoserine" evidence="29 32 33 34 35">
    <location>
        <position position="1283"/>
    </location>
</feature>
<feature type="modified residue" description="Phosphoserine" evidence="35">
    <location>
        <position position="1319"/>
    </location>
</feature>
<feature type="modified residue" description="Phosphoserine" evidence="28">
    <location>
        <position position="1334"/>
    </location>
</feature>
<feature type="modified residue" description="Phosphoserine" evidence="26 29 30 32 33 34 35">
    <location>
        <position position="1358"/>
    </location>
</feature>
<feature type="modified residue" description="Phosphoserine" evidence="1">
    <location>
        <position position="1366"/>
    </location>
</feature>
<feature type="modified residue" description="Phosphothreonine" evidence="27">
    <location>
        <position position="1367"/>
    </location>
</feature>
<feature type="modified residue" description="Phosphoserine" evidence="1">
    <location>
        <position position="1369"/>
    </location>
</feature>
<feature type="modified residue" description="Phosphothreonine" evidence="26 32 35">
    <location>
        <position position="1370"/>
    </location>
</feature>
<feature type="modified residue" description="Phosphothreonine" evidence="34">
    <location>
        <position position="1381"/>
    </location>
</feature>
<feature type="modified residue" description="Phosphoserine" evidence="34">
    <location>
        <position position="1383"/>
    </location>
</feature>
<feature type="modified residue" description="Phosphoserine" evidence="1">
    <location>
        <position position="1417"/>
    </location>
</feature>
<feature type="splice variant" id="VSP_052396" description="In isoform 5." evidence="14">
    <location>
        <begin position="1"/>
        <end position="1230"/>
    </location>
</feature>
<feature type="splice variant" id="VSP_052397" description="In isoform 4." evidence="15">
    <original>DIFMFITRQLKGLEDTKS</original>
    <variation>ASTDLNNSKIDRYFDLSF</variation>
    <location>
        <begin position="105"/>
        <end position="122"/>
    </location>
</feature>
<feature type="splice variant" id="VSP_052398" description="In isoform 4." evidence="15">
    <location>
        <begin position="123"/>
        <end position="1447"/>
    </location>
</feature>
<feature type="splice variant" id="VSP_052399" description="In isoform 3." evidence="15">
    <original>ALNEMWKCQNLLRHQVKDLLDLIKQPKTDASVKAIFSKV</original>
    <variation>YVSNIKFCSFHPLQYIGFYGKETTNTCILKCNLCSVNIV</variation>
    <location>
        <begin position="491"/>
        <end position="529"/>
    </location>
</feature>
<feature type="splice variant" id="VSP_052400" description="In isoform 3." evidence="15">
    <location>
        <begin position="530"/>
        <end position="1447"/>
    </location>
</feature>
<feature type="splice variant" id="VSP_052401" description="In isoform 5." evidence="14">
    <location>
        <begin position="1356"/>
        <end position="1447"/>
    </location>
</feature>
<feature type="splice variant" id="VSP_052402" description="In isoform 2." evidence="13">
    <location>
        <begin position="1392"/>
        <end position="1447"/>
    </location>
</feature>
<feature type="sequence conflict" description="In Ref. 2; AAD22134." evidence="16" ref="2">
    <original>F</original>
    <variation>S</variation>
    <location>
        <position position="256"/>
    </location>
</feature>
<feature type="sequence conflict" description="In Ref. 8; AAH39256." evidence="16" ref="8">
    <original>H</original>
    <variation>N</variation>
    <location>
        <position position="326"/>
    </location>
</feature>
<feature type="sequence conflict" description="In Ref. 2; AAD22134." evidence="16" ref="2">
    <original>R</original>
    <variation>G</variation>
    <location>
        <position position="394"/>
    </location>
</feature>
<feature type="sequence conflict" description="In Ref. 2; AAD22134." evidence="16" ref="2">
    <original>N</original>
    <variation>S</variation>
    <location>
        <position position="535"/>
    </location>
</feature>
<feature type="sequence conflict" description="In Ref. 2; AAD22134." evidence="16" ref="2">
    <original>T</original>
    <variation>A</variation>
    <location>
        <position position="742"/>
    </location>
</feature>
<feature type="sequence conflict" description="In Ref. 2; AAD22134." evidence="16" ref="2">
    <original>E</original>
    <variation>G</variation>
    <location>
        <position position="1115"/>
    </location>
</feature>
<feature type="sequence conflict" description="In Ref. 2; AAD22134." evidence="16" ref="2">
    <original>S</original>
    <variation>G</variation>
    <location>
        <position position="1156"/>
    </location>
</feature>
<feature type="sequence conflict" description="In Ref. 2; AAD22134." evidence="16" ref="2">
    <original>K</original>
    <variation>R</variation>
    <location>
        <position position="1197"/>
    </location>
</feature>
<feature type="sequence conflict" description="In Ref. 2; AAD22134." evidence="16" ref="2">
    <original>Q</original>
    <variation>R</variation>
    <location>
        <position position="1225"/>
    </location>
</feature>
<feature type="sequence conflict" description="In Ref. 2; AAD22134." evidence="16" ref="2">
    <original>K</original>
    <variation>R</variation>
    <location>
        <position position="1242"/>
    </location>
</feature>
<feature type="sequence conflict" description="In Ref. 2; AAD22134." evidence="16" ref="2">
    <original>P</original>
    <variation>S</variation>
    <location>
        <position position="1359"/>
    </location>
</feature>
<feature type="strand" evidence="37">
    <location>
        <begin position="24"/>
        <end position="26"/>
    </location>
</feature>
<feature type="helix" evidence="37">
    <location>
        <begin position="28"/>
        <end position="44"/>
    </location>
</feature>
<feature type="helix" evidence="37">
    <location>
        <begin position="50"/>
        <end position="63"/>
    </location>
</feature>
<feature type="helix" evidence="37">
    <location>
        <begin position="66"/>
        <end position="69"/>
    </location>
</feature>
<feature type="helix" evidence="37">
    <location>
        <begin position="74"/>
        <end position="91"/>
    </location>
</feature>
<feature type="helix" evidence="37">
    <location>
        <begin position="100"/>
        <end position="113"/>
    </location>
</feature>
<feature type="helix" evidence="37">
    <location>
        <begin position="114"/>
        <end position="118"/>
    </location>
</feature>
<feature type="helix" evidence="37">
    <location>
        <begin position="125"/>
        <end position="138"/>
    </location>
</feature>
<feature type="helix" evidence="37">
    <location>
        <begin position="140"/>
        <end position="146"/>
    </location>
</feature>
<feature type="helix" evidence="37">
    <location>
        <begin position="150"/>
        <end position="164"/>
    </location>
</feature>
<feature type="helix" evidence="37">
    <location>
        <begin position="171"/>
        <end position="186"/>
    </location>
</feature>
<feature type="strand" evidence="37">
    <location>
        <begin position="187"/>
        <end position="189"/>
    </location>
</feature>
<feature type="helix" evidence="37">
    <location>
        <begin position="193"/>
        <end position="200"/>
    </location>
</feature>
<feature type="helix" evidence="37">
    <location>
        <begin position="201"/>
        <end position="203"/>
    </location>
</feature>
<feature type="helix" evidence="37">
    <location>
        <begin position="205"/>
        <end position="210"/>
    </location>
</feature>
<feature type="helix" evidence="37">
    <location>
        <begin position="212"/>
        <end position="224"/>
    </location>
</feature>
<feature type="helix" evidence="37">
    <location>
        <begin position="226"/>
        <end position="240"/>
    </location>
</feature>
<feature type="helix" evidence="37">
    <location>
        <begin position="252"/>
        <end position="254"/>
    </location>
</feature>
<feature type="helix" evidence="37">
    <location>
        <begin position="255"/>
        <end position="265"/>
    </location>
</feature>
<feature type="helix" evidence="37">
    <location>
        <begin position="267"/>
        <end position="270"/>
    </location>
</feature>
<feature type="turn" evidence="37">
    <location>
        <begin position="271"/>
        <end position="273"/>
    </location>
</feature>
<feature type="helix" evidence="37">
    <location>
        <begin position="274"/>
        <end position="280"/>
    </location>
</feature>
<feature type="helix" evidence="37">
    <location>
        <begin position="286"/>
        <end position="301"/>
    </location>
</feature>
<feature type="helix" evidence="37">
    <location>
        <begin position="307"/>
        <end position="310"/>
    </location>
</feature>
<feature type="helix" evidence="37">
    <location>
        <begin position="312"/>
        <end position="319"/>
    </location>
</feature>
<feature type="helix" evidence="37">
    <location>
        <begin position="320"/>
        <end position="323"/>
    </location>
</feature>
<feature type="helix" evidence="37">
    <location>
        <begin position="327"/>
        <end position="343"/>
    </location>
</feature>
<feature type="helix" evidence="37">
    <location>
        <begin position="345"/>
        <end position="350"/>
    </location>
</feature>
<feature type="helix" evidence="37">
    <location>
        <begin position="352"/>
        <end position="358"/>
    </location>
</feature>
<feature type="helix" evidence="37">
    <location>
        <begin position="364"/>
        <end position="380"/>
    </location>
</feature>
<feature type="helix" evidence="37">
    <location>
        <begin position="382"/>
        <end position="384"/>
    </location>
</feature>
<feature type="helix" evidence="37">
    <location>
        <begin position="387"/>
        <end position="396"/>
    </location>
</feature>
<feature type="helix" evidence="37">
    <location>
        <begin position="402"/>
        <end position="419"/>
    </location>
</feature>
<feature type="helix" evidence="37">
    <location>
        <begin position="427"/>
        <end position="432"/>
    </location>
</feature>
<feature type="turn" evidence="37">
    <location>
        <begin position="433"/>
        <end position="435"/>
    </location>
</feature>
<feature type="helix" evidence="37">
    <location>
        <begin position="436"/>
        <end position="442"/>
    </location>
</feature>
<feature type="helix" evidence="37">
    <location>
        <begin position="443"/>
        <end position="445"/>
    </location>
</feature>
<feature type="helix" evidence="37">
    <location>
        <begin position="449"/>
        <end position="461"/>
    </location>
</feature>
<feature type="helix" evidence="37">
    <location>
        <begin position="470"/>
        <end position="481"/>
    </location>
</feature>
<feature type="helix" evidence="37">
    <location>
        <begin position="486"/>
        <end position="514"/>
    </location>
</feature>
<feature type="helix" evidence="37">
    <location>
        <begin position="519"/>
        <end position="533"/>
    </location>
</feature>
<feature type="helix" evidence="37">
    <location>
        <begin position="539"/>
        <end position="555"/>
    </location>
</feature>
<feature type="helix" evidence="37">
    <location>
        <begin position="557"/>
        <end position="567"/>
    </location>
</feature>
<feature type="helix" evidence="37">
    <location>
        <begin position="573"/>
        <end position="585"/>
    </location>
</feature>
<feature type="helix" evidence="37">
    <location>
        <begin position="596"/>
        <end position="608"/>
    </location>
</feature>
<feature type="helix" evidence="37">
    <location>
        <begin position="615"/>
        <end position="629"/>
    </location>
</feature>
<feature type="helix" evidence="37">
    <location>
        <begin position="634"/>
        <end position="638"/>
    </location>
</feature>
<feature type="helix" evidence="37">
    <location>
        <begin position="642"/>
        <end position="659"/>
    </location>
</feature>
<feature type="helix" evidence="37">
    <location>
        <begin position="662"/>
        <end position="664"/>
    </location>
</feature>
<feature type="helix" evidence="37">
    <location>
        <begin position="667"/>
        <end position="677"/>
    </location>
</feature>
<feature type="helix" evidence="37">
    <location>
        <begin position="682"/>
        <end position="695"/>
    </location>
</feature>
<feature type="helix" evidence="37">
    <location>
        <begin position="699"/>
        <end position="702"/>
    </location>
</feature>
<feature type="helix" evidence="37">
    <location>
        <begin position="704"/>
        <end position="720"/>
    </location>
</feature>
<feature type="helix" evidence="37">
    <location>
        <begin position="723"/>
        <end position="736"/>
    </location>
</feature>
<feature type="helix" evidence="37">
    <location>
        <begin position="740"/>
        <end position="754"/>
    </location>
</feature>
<feature type="helix" evidence="37">
    <location>
        <begin position="761"/>
        <end position="763"/>
    </location>
</feature>
<feature type="helix" evidence="37">
    <location>
        <begin position="764"/>
        <end position="776"/>
    </location>
</feature>
<feature type="turn" evidence="37">
    <location>
        <begin position="778"/>
        <end position="781"/>
    </location>
</feature>
<feature type="helix" evidence="37">
    <location>
        <begin position="782"/>
        <end position="791"/>
    </location>
</feature>
<feature type="helix" evidence="37">
    <location>
        <begin position="794"/>
        <end position="797"/>
    </location>
</feature>
<feature type="helix" evidence="37">
    <location>
        <begin position="815"/>
        <end position="817"/>
    </location>
</feature>
<feature type="helix" evidence="37">
    <location>
        <begin position="820"/>
        <end position="839"/>
    </location>
</feature>
<feature type="helix" evidence="37">
    <location>
        <begin position="846"/>
        <end position="859"/>
    </location>
</feature>
<feature type="turn" evidence="37">
    <location>
        <begin position="860"/>
        <end position="862"/>
    </location>
</feature>
<feature type="helix" evidence="37">
    <location>
        <begin position="872"/>
        <end position="890"/>
    </location>
</feature>
<feature type="helix" evidence="37">
    <location>
        <begin position="893"/>
        <end position="896"/>
    </location>
</feature>
<feature type="helix" evidence="37">
    <location>
        <begin position="901"/>
        <end position="908"/>
    </location>
</feature>
<feature type="helix" evidence="37">
    <location>
        <begin position="909"/>
        <end position="912"/>
    </location>
</feature>
<feature type="helix" evidence="37">
    <location>
        <begin position="916"/>
        <end position="931"/>
    </location>
</feature>
<feature type="helix" evidence="37">
    <location>
        <begin position="937"/>
        <end position="939"/>
    </location>
</feature>
<feature type="helix" evidence="37">
    <location>
        <begin position="941"/>
        <end position="948"/>
    </location>
</feature>
<feature type="helix" evidence="37">
    <location>
        <begin position="952"/>
        <end position="975"/>
    </location>
</feature>
<feature type="helix" evidence="37">
    <location>
        <begin position="980"/>
        <end position="984"/>
    </location>
</feature>
<feature type="helix" evidence="37">
    <location>
        <begin position="988"/>
        <end position="990"/>
    </location>
</feature>
<feature type="helix" evidence="37">
    <location>
        <begin position="991"/>
        <end position="1000"/>
    </location>
</feature>
<feature type="helix" evidence="37">
    <location>
        <begin position="1011"/>
        <end position="1028"/>
    </location>
</feature>
<feature type="helix" evidence="37">
    <location>
        <begin position="1036"/>
        <end position="1047"/>
    </location>
</feature>
<feature type="strand" evidence="37">
    <location>
        <begin position="1053"/>
        <end position="1055"/>
    </location>
</feature>
<feature type="helix" evidence="37">
    <location>
        <begin position="1059"/>
        <end position="1079"/>
    </location>
</feature>
<feature type="strand" evidence="37">
    <location>
        <begin position="1081"/>
        <end position="1085"/>
    </location>
</feature>
<feature type="turn" evidence="37">
    <location>
        <begin position="1095"/>
        <end position="1097"/>
    </location>
</feature>
<reference evidence="16" key="1">
    <citation type="journal article" date="1997" name="J. Steroid Biochem. Mol. Biol.">
        <title>Expression of novel genes linked to the androgen-induced, proliferative shutoff in prostate cancer cells.</title>
        <authorList>
            <person name="Geck P."/>
            <person name="Szelei J."/>
            <person name="Jimenez J."/>
            <person name="Lin T.-M."/>
            <person name="Sonnenschein C."/>
            <person name="Soto A.M."/>
        </authorList>
    </citation>
    <scope>NUCLEOTIDE SEQUENCE [MRNA]</scope>
    <scope>TISSUE SPECIFICITY</scope>
    <scope>INDUCTION</scope>
</reference>
<reference evidence="16 20" key="2">
    <citation type="journal article" date="1999" name="J. Steroid Biochem. Mol. Biol.">
        <title>Early gene expression during androgen-induced inhibition of proliferation of prostate cancer cells: a new suppressor candidate on chromosome 13, in the BRCA2-Rb1 locus.</title>
        <authorList>
            <person name="Geck P."/>
            <person name="Szelei J."/>
            <person name="Jimenez J."/>
            <person name="Sonnenschein C."/>
            <person name="Soto A.M."/>
        </authorList>
    </citation>
    <scope>NUCLEOTIDE SEQUENCE [MRNA] (ISOFORM 2)</scope>
    <source>
        <tissue evidence="20">Prostate</tissue>
    </source>
</reference>
<reference evidence="16 23" key="3">
    <citation type="journal article" date="1999" name="DNA Res.">
        <title>Prediction of the coding sequences of unidentified human genes. XIII. The complete sequences of 100 new cDNA clones from brain which code for large proteins in vitro.</title>
        <authorList>
            <person name="Nagase T."/>
            <person name="Ishikawa K."/>
            <person name="Suyama M."/>
            <person name="Kikuno R."/>
            <person name="Hirosawa M."/>
            <person name="Miyajima N."/>
            <person name="Tanaka A."/>
            <person name="Kotani H."/>
            <person name="Nomura N."/>
            <person name="Ohara O."/>
        </authorList>
    </citation>
    <scope>NUCLEOTIDE SEQUENCE [LARGE SCALE MRNA] (ISOFORM 1)</scope>
    <source>
        <tissue evidence="23">Brain</tissue>
    </source>
</reference>
<reference key="4">
    <citation type="journal article" date="2002" name="DNA Res.">
        <title>Construction of expression-ready cDNA clones for KIAA genes: manual curation of 330 KIAA cDNA clones.</title>
        <authorList>
            <person name="Nakajima D."/>
            <person name="Okazaki N."/>
            <person name="Yamakawa H."/>
            <person name="Kikuno R."/>
            <person name="Ohara O."/>
            <person name="Nagase T."/>
        </authorList>
    </citation>
    <scope>SEQUENCE REVISION</scope>
</reference>
<reference evidence="16 24" key="5">
    <citation type="journal article" date="2004" name="Nat. Genet.">
        <title>Complete sequencing and characterization of 21,243 full-length human cDNAs.</title>
        <authorList>
            <person name="Ota T."/>
            <person name="Suzuki Y."/>
            <person name="Nishikawa T."/>
            <person name="Otsuki T."/>
            <person name="Sugiyama T."/>
            <person name="Irie R."/>
            <person name="Wakamatsu A."/>
            <person name="Hayashi K."/>
            <person name="Sato H."/>
            <person name="Nagai K."/>
            <person name="Kimura K."/>
            <person name="Makita H."/>
            <person name="Sekine M."/>
            <person name="Obayashi M."/>
            <person name="Nishi T."/>
            <person name="Shibahara T."/>
            <person name="Tanaka T."/>
            <person name="Ishii S."/>
            <person name="Yamamoto J."/>
            <person name="Saito K."/>
            <person name="Kawai Y."/>
            <person name="Isono Y."/>
            <person name="Nakamura Y."/>
            <person name="Nagahari K."/>
            <person name="Murakami K."/>
            <person name="Yasuda T."/>
            <person name="Iwayanagi T."/>
            <person name="Wagatsuma M."/>
            <person name="Shiratori A."/>
            <person name="Sudo H."/>
            <person name="Hosoiri T."/>
            <person name="Kaku Y."/>
            <person name="Kodaira H."/>
            <person name="Kondo H."/>
            <person name="Sugawara M."/>
            <person name="Takahashi M."/>
            <person name="Kanda K."/>
            <person name="Yokoi T."/>
            <person name="Furuya T."/>
            <person name="Kikkawa E."/>
            <person name="Omura Y."/>
            <person name="Abe K."/>
            <person name="Kamihara K."/>
            <person name="Katsuta N."/>
            <person name="Sato K."/>
            <person name="Tanikawa M."/>
            <person name="Yamazaki M."/>
            <person name="Ninomiya K."/>
            <person name="Ishibashi T."/>
            <person name="Yamashita H."/>
            <person name="Murakawa K."/>
            <person name="Fujimori K."/>
            <person name="Tanai H."/>
            <person name="Kimata M."/>
            <person name="Watanabe M."/>
            <person name="Hiraoka S."/>
            <person name="Chiba Y."/>
            <person name="Ishida S."/>
            <person name="Ono Y."/>
            <person name="Takiguchi S."/>
            <person name="Watanabe S."/>
            <person name="Yosida M."/>
            <person name="Hotuta T."/>
            <person name="Kusano J."/>
            <person name="Kanehori K."/>
            <person name="Takahashi-Fujii A."/>
            <person name="Hara H."/>
            <person name="Tanase T.-O."/>
            <person name="Nomura Y."/>
            <person name="Togiya S."/>
            <person name="Komai F."/>
            <person name="Hara R."/>
            <person name="Takeuchi K."/>
            <person name="Arita M."/>
            <person name="Imose N."/>
            <person name="Musashino K."/>
            <person name="Yuuki H."/>
            <person name="Oshima A."/>
            <person name="Sasaki N."/>
            <person name="Aotsuka S."/>
            <person name="Yoshikawa Y."/>
            <person name="Matsunawa H."/>
            <person name="Ichihara T."/>
            <person name="Shiohata N."/>
            <person name="Sano S."/>
            <person name="Moriya S."/>
            <person name="Momiyama H."/>
            <person name="Satoh N."/>
            <person name="Takami S."/>
            <person name="Terashima Y."/>
            <person name="Suzuki O."/>
            <person name="Nakagawa S."/>
            <person name="Senoh A."/>
            <person name="Mizoguchi H."/>
            <person name="Goto Y."/>
            <person name="Shimizu F."/>
            <person name="Wakebe H."/>
            <person name="Hishigaki H."/>
            <person name="Watanabe T."/>
            <person name="Sugiyama A."/>
            <person name="Takemoto M."/>
            <person name="Kawakami B."/>
            <person name="Yamazaki M."/>
            <person name="Watanabe K."/>
            <person name="Kumagai A."/>
            <person name="Itakura S."/>
            <person name="Fukuzumi Y."/>
            <person name="Fujimori Y."/>
            <person name="Komiyama M."/>
            <person name="Tashiro H."/>
            <person name="Tanigami A."/>
            <person name="Fujiwara T."/>
            <person name="Ono T."/>
            <person name="Yamada K."/>
            <person name="Fujii Y."/>
            <person name="Ozaki K."/>
            <person name="Hirao M."/>
            <person name="Ohmori Y."/>
            <person name="Kawabata A."/>
            <person name="Hikiji T."/>
            <person name="Kobatake N."/>
            <person name="Inagaki H."/>
            <person name="Ikema Y."/>
            <person name="Okamoto S."/>
            <person name="Okitani R."/>
            <person name="Kawakami T."/>
            <person name="Noguchi S."/>
            <person name="Itoh T."/>
            <person name="Shigeta K."/>
            <person name="Senba T."/>
            <person name="Matsumura K."/>
            <person name="Nakajima Y."/>
            <person name="Mizuno T."/>
            <person name="Morinaga M."/>
            <person name="Sasaki M."/>
            <person name="Togashi T."/>
            <person name="Oyama M."/>
            <person name="Hata H."/>
            <person name="Watanabe M."/>
            <person name="Komatsu T."/>
            <person name="Mizushima-Sugano J."/>
            <person name="Satoh T."/>
            <person name="Shirai Y."/>
            <person name="Takahashi Y."/>
            <person name="Nakagawa K."/>
            <person name="Okumura K."/>
            <person name="Nagase T."/>
            <person name="Nomura N."/>
            <person name="Kikuchi H."/>
            <person name="Masuho Y."/>
            <person name="Yamashita R."/>
            <person name="Nakai K."/>
            <person name="Yada T."/>
            <person name="Nakamura Y."/>
            <person name="Ohara O."/>
            <person name="Isogai T."/>
            <person name="Sugano S."/>
        </authorList>
    </citation>
    <scope>NUCLEOTIDE SEQUENCE [LARGE SCALE MRNA] (ISOFORM 5)</scope>
    <source>
        <tissue evidence="24">Colon</tissue>
    </source>
</reference>
<reference evidence="25" key="6">
    <citation type="submission" date="2000-01" db="EMBL/GenBank/DDBJ databases">
        <authorList>
            <person name="Rhodes S."/>
            <person name="Huckle E."/>
        </authorList>
    </citation>
    <scope>NUCLEOTIDE SEQUENCE [LARGE SCALE MRNA]</scope>
</reference>
<reference evidence="25" key="7">
    <citation type="journal article" date="2004" name="Nature">
        <title>The DNA sequence and analysis of human chromosome 13.</title>
        <authorList>
            <person name="Dunham A."/>
            <person name="Matthews L.H."/>
            <person name="Burton J."/>
            <person name="Ashurst J.L."/>
            <person name="Howe K.L."/>
            <person name="Ashcroft K.J."/>
            <person name="Beare D.M."/>
            <person name="Burford D.C."/>
            <person name="Hunt S.E."/>
            <person name="Griffiths-Jones S."/>
            <person name="Jones M.C."/>
            <person name="Keenan S.J."/>
            <person name="Oliver K."/>
            <person name="Scott C.E."/>
            <person name="Ainscough R."/>
            <person name="Almeida J.P."/>
            <person name="Ambrose K.D."/>
            <person name="Andrews D.T."/>
            <person name="Ashwell R.I.S."/>
            <person name="Babbage A.K."/>
            <person name="Bagguley C.L."/>
            <person name="Bailey J."/>
            <person name="Bannerjee R."/>
            <person name="Barlow K.F."/>
            <person name="Bates K."/>
            <person name="Beasley H."/>
            <person name="Bird C.P."/>
            <person name="Bray-Allen S."/>
            <person name="Brown A.J."/>
            <person name="Brown J.Y."/>
            <person name="Burrill W."/>
            <person name="Carder C."/>
            <person name="Carter N.P."/>
            <person name="Chapman J.C."/>
            <person name="Clamp M.E."/>
            <person name="Clark S.Y."/>
            <person name="Clarke G."/>
            <person name="Clee C.M."/>
            <person name="Clegg S.C."/>
            <person name="Cobley V."/>
            <person name="Collins J.E."/>
            <person name="Corby N."/>
            <person name="Coville G.J."/>
            <person name="Deloukas P."/>
            <person name="Dhami P."/>
            <person name="Dunham I."/>
            <person name="Dunn M."/>
            <person name="Earthrowl M.E."/>
            <person name="Ellington A.G."/>
            <person name="Faulkner L."/>
            <person name="Frankish A.G."/>
            <person name="Frankland J."/>
            <person name="French L."/>
            <person name="Garner P."/>
            <person name="Garnett J."/>
            <person name="Gilbert J.G.R."/>
            <person name="Gilson C.J."/>
            <person name="Ghori J."/>
            <person name="Grafham D.V."/>
            <person name="Gribble S.M."/>
            <person name="Griffiths C."/>
            <person name="Hall R.E."/>
            <person name="Hammond S."/>
            <person name="Harley J.L."/>
            <person name="Hart E.A."/>
            <person name="Heath P.D."/>
            <person name="Howden P.J."/>
            <person name="Huckle E.J."/>
            <person name="Hunt P.J."/>
            <person name="Hunt A.R."/>
            <person name="Johnson C."/>
            <person name="Johnson D."/>
            <person name="Kay M."/>
            <person name="Kimberley A.M."/>
            <person name="King A."/>
            <person name="Laird G.K."/>
            <person name="Langford C.J."/>
            <person name="Lawlor S."/>
            <person name="Leongamornlert D.A."/>
            <person name="Lloyd D.M."/>
            <person name="Lloyd C."/>
            <person name="Loveland J.E."/>
            <person name="Lovell J."/>
            <person name="Martin S."/>
            <person name="Mashreghi-Mohammadi M."/>
            <person name="McLaren S.J."/>
            <person name="McMurray A."/>
            <person name="Milne S."/>
            <person name="Moore M.J.F."/>
            <person name="Nickerson T."/>
            <person name="Palmer S.A."/>
            <person name="Pearce A.V."/>
            <person name="Peck A.I."/>
            <person name="Pelan S."/>
            <person name="Phillimore B."/>
            <person name="Porter K.M."/>
            <person name="Rice C.M."/>
            <person name="Searle S."/>
            <person name="Sehra H.K."/>
            <person name="Shownkeen R."/>
            <person name="Skuce C.D."/>
            <person name="Smith M."/>
            <person name="Steward C.A."/>
            <person name="Sycamore N."/>
            <person name="Tester J."/>
            <person name="Thomas D.W."/>
            <person name="Tracey A."/>
            <person name="Tromans A."/>
            <person name="Tubby B."/>
            <person name="Wall M."/>
            <person name="Wallis J.M."/>
            <person name="West A.P."/>
            <person name="Whitehead S.L."/>
            <person name="Willey D.L."/>
            <person name="Wilming L."/>
            <person name="Wray P.W."/>
            <person name="Wright M.W."/>
            <person name="Young L."/>
            <person name="Coulson A."/>
            <person name="Durbin R.M."/>
            <person name="Hubbard T."/>
            <person name="Sulston J.E."/>
            <person name="Beck S."/>
            <person name="Bentley D.R."/>
            <person name="Rogers J."/>
            <person name="Ross M.T."/>
        </authorList>
    </citation>
    <scope>NUCLEOTIDE SEQUENCE [LARGE SCALE GENOMIC DNA]</scope>
</reference>
<reference evidence="16 21" key="8">
    <citation type="journal article" date="2004" name="Genome Res.">
        <title>The status, quality, and expansion of the NIH full-length cDNA project: the Mammalian Gene Collection (MGC).</title>
        <authorList>
            <consortium name="The MGC Project Team"/>
        </authorList>
    </citation>
    <scope>NUCLEOTIDE SEQUENCE [LARGE SCALE MRNA] (ISOFORMS 3 AND 4)</scope>
    <source>
        <tissue evidence="22">Prostate</tissue>
        <tissue evidence="21">Testis</tissue>
    </source>
</reference>
<reference evidence="16" key="9">
    <citation type="journal article" date="2000" name="Proc. Natl. Acad. Sci. U.S.A.">
        <title>Androgen-induced proliferative quiescence in prostate cancer cells: the role of AS3 as its mediator.</title>
        <authorList>
            <person name="Geck P."/>
            <person name="Maffini M.V."/>
            <person name="Szelei J."/>
            <person name="Sonnenschein C."/>
            <person name="Soto A.M."/>
        </authorList>
    </citation>
    <scope>FUNCTION</scope>
</reference>
<reference evidence="16" key="10">
    <citation type="journal article" date="2005" name="J. Cell Sci.">
        <title>Functional contribution of Pds5 to cohesin-mediated cohesion in human cells and Xenopus egg extracts.</title>
        <authorList>
            <person name="Losada A."/>
            <person name="Yokochi T."/>
            <person name="Hirano T."/>
        </authorList>
    </citation>
    <scope>FUNCTION</scope>
    <scope>INTERACTION WITH COHESIN COMPLEX</scope>
</reference>
<reference key="11">
    <citation type="journal article" date="2006" name="Cell">
        <title>Global, in vivo, and site-specific phosphorylation dynamics in signaling networks.</title>
        <authorList>
            <person name="Olsen J.V."/>
            <person name="Blagoev B."/>
            <person name="Gnad F."/>
            <person name="Macek B."/>
            <person name="Kumar C."/>
            <person name="Mortensen P."/>
            <person name="Mann M."/>
        </authorList>
    </citation>
    <scope>IDENTIFICATION BY MASS SPECTROMETRY [LARGE SCALE ANALYSIS]</scope>
    <source>
        <tissue>Cervix carcinoma</tissue>
    </source>
</reference>
<reference key="12">
    <citation type="journal article" date="2006" name="Nat. Biotechnol.">
        <title>A probability-based approach for high-throughput protein phosphorylation analysis and site localization.</title>
        <authorList>
            <person name="Beausoleil S.A."/>
            <person name="Villen J."/>
            <person name="Gerber S.A."/>
            <person name="Rush J."/>
            <person name="Gygi S.P."/>
        </authorList>
    </citation>
    <scope>PHOSPHORYLATION [LARGE SCALE ANALYSIS] AT SER-1358 AND THR-1370</scope>
    <scope>IDENTIFICATION BY MASS SPECTROMETRY [LARGE SCALE ANALYSIS]</scope>
    <source>
        <tissue>Cervix carcinoma</tissue>
    </source>
</reference>
<reference key="13">
    <citation type="journal article" date="2007" name="Science">
        <title>ATM and ATR substrate analysis reveals extensive protein networks responsive to DNA damage.</title>
        <authorList>
            <person name="Matsuoka S."/>
            <person name="Ballif B.A."/>
            <person name="Smogorzewska A."/>
            <person name="McDonald E.R. III"/>
            <person name="Hurov K.E."/>
            <person name="Luo J."/>
            <person name="Bakalarski C.E."/>
            <person name="Zhao Z."/>
            <person name="Solimini N."/>
            <person name="Lerenthal Y."/>
            <person name="Shiloh Y."/>
            <person name="Gygi S.P."/>
            <person name="Elledge S.J."/>
        </authorList>
    </citation>
    <scope>PHOSPHORYLATION [LARGE SCALE ANALYSIS] AT THR-1367</scope>
    <scope>IDENTIFICATION BY MASS SPECTROMETRY [LARGE SCALE ANALYSIS]</scope>
    <source>
        <tissue>Embryonic kidney</tissue>
    </source>
</reference>
<reference key="14">
    <citation type="journal article" date="2008" name="J. Proteome Res.">
        <title>Phosphorylation analysis of primary human T lymphocytes using sequential IMAC and titanium oxide enrichment.</title>
        <authorList>
            <person name="Carrascal M."/>
            <person name="Ovelleiro D."/>
            <person name="Casas V."/>
            <person name="Gay M."/>
            <person name="Abian J."/>
        </authorList>
    </citation>
    <scope>PHOSPHORYLATION [LARGE SCALE ANALYSIS] AT SER-1358</scope>
    <scope>IDENTIFICATION BY MASS SPECTROMETRY [LARGE SCALE ANALYSIS]</scope>
    <source>
        <tissue>T-cell</tissue>
    </source>
</reference>
<reference key="15">
    <citation type="journal article" date="2008" name="Mol. Cell">
        <title>Kinase-selective enrichment enables quantitative phosphoproteomics of the kinome across the cell cycle.</title>
        <authorList>
            <person name="Daub H."/>
            <person name="Olsen J.V."/>
            <person name="Bairlein M."/>
            <person name="Gnad F."/>
            <person name="Oppermann F.S."/>
            <person name="Korner R."/>
            <person name="Greff Z."/>
            <person name="Keri G."/>
            <person name="Stemmann O."/>
            <person name="Mann M."/>
        </authorList>
    </citation>
    <scope>PHOSPHORYLATION [LARGE SCALE ANALYSIS] AT SER-1182; SER-1283 AND SER-1358</scope>
    <scope>IDENTIFICATION BY MASS SPECTROMETRY [LARGE SCALE ANALYSIS]</scope>
    <source>
        <tissue>Cervix carcinoma</tissue>
    </source>
</reference>
<reference key="16">
    <citation type="journal article" date="2008" name="Proc. Natl. Acad. Sci. U.S.A.">
        <title>A quantitative atlas of mitotic phosphorylation.</title>
        <authorList>
            <person name="Dephoure N."/>
            <person name="Zhou C."/>
            <person name="Villen J."/>
            <person name="Beausoleil S.A."/>
            <person name="Bakalarski C.E."/>
            <person name="Elledge S.J."/>
            <person name="Gygi S.P."/>
        </authorList>
    </citation>
    <scope>PHOSPHORYLATION [LARGE SCALE ANALYSIS] AT SER-1257 AND SER-1334</scope>
    <scope>IDENTIFICATION BY MASS SPECTROMETRY [LARGE SCALE ANALYSIS]</scope>
    <source>
        <tissue>Cervix carcinoma</tissue>
    </source>
</reference>
<reference key="17">
    <citation type="journal article" date="2009" name="Anal. Chem.">
        <title>Lys-N and trypsin cover complementary parts of the phosphoproteome in a refined SCX-based approach.</title>
        <authorList>
            <person name="Gauci S."/>
            <person name="Helbig A.O."/>
            <person name="Slijper M."/>
            <person name="Krijgsveld J."/>
            <person name="Heck A.J."/>
            <person name="Mohammed S."/>
        </authorList>
    </citation>
    <scope>IDENTIFICATION BY MASS SPECTROMETRY [LARGE SCALE ANALYSIS]</scope>
</reference>
<reference key="18">
    <citation type="journal article" date="2009" name="Genes Dev.">
        <title>Releasing cohesin from chromosome arms in early mitosis: opposing actions of Wapl-Pds5 and Sgo1.</title>
        <authorList>
            <person name="Shintomi K."/>
            <person name="Hirano T."/>
        </authorList>
    </citation>
    <scope>FUNCTION</scope>
    <scope>INTERACTION WITH WAPL AND RAD21</scope>
</reference>
<reference key="19">
    <citation type="journal article" date="2009" name="Sci. Signal.">
        <title>Quantitative phosphoproteomic analysis of T cell receptor signaling reveals system-wide modulation of protein-protein interactions.</title>
        <authorList>
            <person name="Mayya V."/>
            <person name="Lundgren D.H."/>
            <person name="Hwang S.-I."/>
            <person name="Rezaul K."/>
            <person name="Wu L."/>
            <person name="Eng J.K."/>
            <person name="Rodionov V."/>
            <person name="Han D.K."/>
        </authorList>
    </citation>
    <scope>PHOSPHORYLATION [LARGE SCALE ANALYSIS] AT SER-1162; SER-1166; SER-1176; SER-1182; SER-1191; SER-1257; SER-1283; SER-1358 AND THR-1370</scope>
    <scope>IDENTIFICATION BY MASS SPECTROMETRY [LARGE SCALE ANALYSIS]</scope>
    <source>
        <tissue>Leukemic T-cell</tissue>
    </source>
</reference>
<reference key="20">
    <citation type="journal article" date="2009" name="Science">
        <title>Lysine acetylation targets protein complexes and co-regulates major cellular functions.</title>
        <authorList>
            <person name="Choudhary C."/>
            <person name="Kumar C."/>
            <person name="Gnad F."/>
            <person name="Nielsen M.L."/>
            <person name="Rehman M."/>
            <person name="Walther T.C."/>
            <person name="Olsen J.V."/>
            <person name="Mann M."/>
        </authorList>
    </citation>
    <scope>ACETYLATION [LARGE SCALE ANALYSIS] AT LYS-1136</scope>
    <scope>IDENTIFICATION BY MASS SPECTROMETRY [LARGE SCALE ANALYSIS]</scope>
</reference>
<reference key="21">
    <citation type="journal article" date="2010" name="Cell">
        <title>Sororin mediates sister chromatid cohesion by antagonizing wapl.</title>
        <authorList>
            <person name="Nishiyama T."/>
            <person name="Ladurner R."/>
            <person name="Schmitz J."/>
            <person name="Kreidl E."/>
            <person name="Schleiffer A."/>
            <person name="Bhaskara V."/>
            <person name="Bando M."/>
            <person name="Shirahige K."/>
            <person name="Hyman A.A."/>
            <person name="Mechtler K."/>
            <person name="Peters J.M."/>
        </authorList>
    </citation>
    <scope>INTERACTION WITH WAPL AND CDCA5</scope>
</reference>
<reference key="22">
    <citation type="journal article" date="2010" name="Sci. Signal.">
        <title>Quantitative phosphoproteomics reveals widespread full phosphorylation site occupancy during mitosis.</title>
        <authorList>
            <person name="Olsen J.V."/>
            <person name="Vermeulen M."/>
            <person name="Santamaria A."/>
            <person name="Kumar C."/>
            <person name="Miller M.L."/>
            <person name="Jensen L.J."/>
            <person name="Gnad F."/>
            <person name="Cox J."/>
            <person name="Jensen T.S."/>
            <person name="Nigg E.A."/>
            <person name="Brunak S."/>
            <person name="Mann M."/>
        </authorList>
    </citation>
    <scope>PHOSPHORYLATION [LARGE SCALE ANALYSIS] AT SER-1166; SER-1182; SER-1283 AND SER-1358</scope>
    <scope>IDENTIFICATION BY MASS SPECTROMETRY [LARGE SCALE ANALYSIS]</scope>
    <source>
        <tissue>Cervix carcinoma</tissue>
    </source>
</reference>
<reference key="23">
    <citation type="journal article" date="2011" name="BMC Syst. Biol.">
        <title>Initial characterization of the human central proteome.</title>
        <authorList>
            <person name="Burkard T.R."/>
            <person name="Planyavsky M."/>
            <person name="Kaupe I."/>
            <person name="Breitwieser F.P."/>
            <person name="Buerckstuemmer T."/>
            <person name="Bennett K.L."/>
            <person name="Superti-Furga G."/>
            <person name="Colinge J."/>
        </authorList>
    </citation>
    <scope>IDENTIFICATION BY MASS SPECTROMETRY [LARGE SCALE ANALYSIS]</scope>
</reference>
<reference key="24">
    <citation type="journal article" date="2011" name="Sci. Signal.">
        <title>System-wide temporal characterization of the proteome and phosphoproteome of human embryonic stem cell differentiation.</title>
        <authorList>
            <person name="Rigbolt K.T."/>
            <person name="Prokhorova T.A."/>
            <person name="Akimov V."/>
            <person name="Henningsen J."/>
            <person name="Johansen P.T."/>
            <person name="Kratchmarova I."/>
            <person name="Kassem M."/>
            <person name="Mann M."/>
            <person name="Olsen J.V."/>
            <person name="Blagoev B."/>
        </authorList>
    </citation>
    <scope>PHOSPHORYLATION [LARGE SCALE ANALYSIS] AT SER-1166; SER-1182; SER-1283; SER-1358; THR-1381 AND SER-1383</scope>
    <scope>IDENTIFICATION BY MASS SPECTROMETRY [LARGE SCALE ANALYSIS]</scope>
</reference>
<reference key="25">
    <citation type="journal article" date="2013" name="J. Proteome Res.">
        <title>Toward a comprehensive characterization of a human cancer cell phosphoproteome.</title>
        <authorList>
            <person name="Zhou H."/>
            <person name="Di Palma S."/>
            <person name="Preisinger C."/>
            <person name="Peng M."/>
            <person name="Polat A.N."/>
            <person name="Heck A.J."/>
            <person name="Mohammed S."/>
        </authorList>
    </citation>
    <scope>PHOSPHORYLATION [LARGE SCALE ANALYSIS] AT SER-1140; SER-1166; SER-1176; SER-1182; THR-1255; SER-1257; SER-1259; SER-1283; SER-1319; SER-1358 AND THR-1370</scope>
    <scope>IDENTIFICATION BY MASS SPECTROMETRY [LARGE SCALE ANALYSIS]</scope>
    <source>
        <tissue>Cervix carcinoma</tissue>
        <tissue>Erythroleukemia</tissue>
    </source>
</reference>
<reference key="26">
    <citation type="journal article" date="2014" name="J. Proteomics">
        <title>An enzyme assisted RP-RPLC approach for in-depth analysis of human liver phosphoproteome.</title>
        <authorList>
            <person name="Bian Y."/>
            <person name="Song C."/>
            <person name="Cheng K."/>
            <person name="Dong M."/>
            <person name="Wang F."/>
            <person name="Huang J."/>
            <person name="Sun D."/>
            <person name="Wang L."/>
            <person name="Ye M."/>
            <person name="Zou H."/>
        </authorList>
    </citation>
    <scope>PHOSPHORYLATION [LARGE SCALE ANALYSIS] AT SER-1166</scope>
    <scope>IDENTIFICATION BY MASS SPECTROMETRY [LARGE SCALE ANALYSIS]</scope>
    <source>
        <tissue>Liver</tissue>
    </source>
</reference>
<keyword id="KW-0002">3D-structure</keyword>
<keyword id="KW-0007">Acetylation</keyword>
<keyword id="KW-0025">Alternative splicing</keyword>
<keyword id="KW-0131">Cell cycle</keyword>
<keyword id="KW-0132">Cell division</keyword>
<keyword id="KW-0498">Mitosis</keyword>
<keyword id="KW-0539">Nucleus</keyword>
<keyword id="KW-0597">Phosphoprotein</keyword>
<keyword id="KW-1267">Proteomics identification</keyword>
<keyword id="KW-1185">Reference proteome</keyword>
<keyword id="KW-0677">Repeat</keyword>
<accession>Q9NTI5</accession>
<accession>Q5R3S3</accession>
<accession>Q5W0K8</accession>
<accession>Q6NSC3</accession>
<accession>Q8IXT6</accession>
<accession>Q9H5N8</accession>
<accession>Q9Y2I5</accession>
<accession>Q9Y451</accession>
<organism>
    <name type="scientific">Homo sapiens</name>
    <name type="common">Human</name>
    <dbReference type="NCBI Taxonomy" id="9606"/>
    <lineage>
        <taxon>Eukaryota</taxon>
        <taxon>Metazoa</taxon>
        <taxon>Chordata</taxon>
        <taxon>Craniata</taxon>
        <taxon>Vertebrata</taxon>
        <taxon>Euteleostomi</taxon>
        <taxon>Mammalia</taxon>
        <taxon>Eutheria</taxon>
        <taxon>Euarchontoglires</taxon>
        <taxon>Primates</taxon>
        <taxon>Haplorrhini</taxon>
        <taxon>Catarrhini</taxon>
        <taxon>Hominidae</taxon>
        <taxon>Homo</taxon>
    </lineage>
</organism>
<gene>
    <name type="primary">PDS5B</name>
    <name type="synonym">APRIN</name>
    <name evidence="20" type="synonym">AS3</name>
    <name evidence="23" type="synonym">KIAA0979</name>
</gene>
<protein>
    <recommendedName>
        <fullName>Sister chromatid cohesion protein PDS5 homolog B</fullName>
    </recommendedName>
    <alternativeName>
        <fullName>Androgen-induced proliferation inhibitor</fullName>
    </alternativeName>
    <alternativeName>
        <fullName>Androgen-induced prostate proliferative shutoff-associated protein AS3</fullName>
    </alternativeName>
</protein>
<dbReference type="EMBL" id="U95825">
    <property type="protein sequence ID" value="AAD22134.2"/>
    <property type="molecule type" value="mRNA"/>
</dbReference>
<dbReference type="EMBL" id="AB023196">
    <property type="protein sequence ID" value="BAA76823.2"/>
    <property type="status" value="ALT_INIT"/>
    <property type="molecule type" value="mRNA"/>
</dbReference>
<dbReference type="EMBL" id="AK026889">
    <property type="protein sequence ID" value="BAB15584.1"/>
    <property type="molecule type" value="mRNA"/>
</dbReference>
<dbReference type="EMBL" id="AL137201">
    <property type="protein sequence ID" value="CAB69911.1"/>
    <property type="molecule type" value="mRNA"/>
</dbReference>
<dbReference type="EMBL" id="AL138820">
    <property type="protein sequence ID" value="CAH73160.2"/>
    <property type="molecule type" value="Genomic_DNA"/>
</dbReference>
<dbReference type="EMBL" id="Z75889">
    <property type="protein sequence ID" value="CAH73160.2"/>
    <property type="status" value="JOINED"/>
    <property type="molecule type" value="Genomic_DNA"/>
</dbReference>
<dbReference type="EMBL" id="Z75889">
    <property type="protein sequence ID" value="CAI10806.2"/>
    <property type="molecule type" value="Genomic_DNA"/>
</dbReference>
<dbReference type="EMBL" id="AL138820">
    <property type="protein sequence ID" value="CAI10806.2"/>
    <property type="status" value="JOINED"/>
    <property type="molecule type" value="Genomic_DNA"/>
</dbReference>
<dbReference type="EMBL" id="BC039256">
    <property type="protein sequence ID" value="AAH39256.1"/>
    <property type="molecule type" value="mRNA"/>
</dbReference>
<dbReference type="EMBL" id="BC070274">
    <property type="protein sequence ID" value="AAH70274.1"/>
    <property type="molecule type" value="mRNA"/>
</dbReference>
<dbReference type="CCDS" id="CCDS41878.1">
    <molecule id="Q9NTI5-1"/>
</dbReference>
<dbReference type="RefSeq" id="NP_055847.1">
    <molecule id="Q9NTI5-1"/>
    <property type="nucleotide sequence ID" value="NM_015032.4"/>
</dbReference>
<dbReference type="RefSeq" id="XP_016875939.1">
    <property type="nucleotide sequence ID" value="XM_017020450.1"/>
</dbReference>
<dbReference type="PDB" id="5HDT">
    <property type="method" value="X-ray"/>
    <property type="resolution" value="2.71 A"/>
    <property type="chains" value="A/B=21-1120"/>
</dbReference>
<dbReference type="PDBsum" id="5HDT"/>
<dbReference type="SMR" id="Q9NTI5"/>
<dbReference type="BioGRID" id="116685">
    <property type="interactions" value="194"/>
</dbReference>
<dbReference type="ComplexPortal" id="CPX-2186">
    <property type="entry name" value="SHU complex"/>
</dbReference>
<dbReference type="CORUM" id="Q9NTI5"/>
<dbReference type="DIP" id="DIP-35420N"/>
<dbReference type="FunCoup" id="Q9NTI5">
    <property type="interactions" value="4400"/>
</dbReference>
<dbReference type="IntAct" id="Q9NTI5">
    <property type="interactions" value="86"/>
</dbReference>
<dbReference type="MINT" id="Q9NTI5"/>
<dbReference type="STRING" id="9606.ENSP00000313851"/>
<dbReference type="GlyCosmos" id="Q9NTI5">
    <property type="glycosylation" value="1 site, 2 glycans"/>
</dbReference>
<dbReference type="GlyGen" id="Q9NTI5">
    <property type="glycosylation" value="2 sites, 2 O-linked glycans (2 sites)"/>
</dbReference>
<dbReference type="iPTMnet" id="Q9NTI5"/>
<dbReference type="MetOSite" id="Q9NTI5"/>
<dbReference type="PhosphoSitePlus" id="Q9NTI5"/>
<dbReference type="SwissPalm" id="Q9NTI5"/>
<dbReference type="BioMuta" id="PDS5B"/>
<dbReference type="DMDM" id="74725312"/>
<dbReference type="jPOST" id="Q9NTI5"/>
<dbReference type="MassIVE" id="Q9NTI5"/>
<dbReference type="PaxDb" id="9606-ENSP00000313851"/>
<dbReference type="PeptideAtlas" id="Q9NTI5"/>
<dbReference type="ProteomicsDB" id="82610">
    <molecule id="Q9NTI5-1"/>
</dbReference>
<dbReference type="ProteomicsDB" id="82611">
    <molecule id="Q9NTI5-2"/>
</dbReference>
<dbReference type="ProteomicsDB" id="82612">
    <molecule id="Q9NTI5-3"/>
</dbReference>
<dbReference type="ProteomicsDB" id="82613">
    <molecule id="Q9NTI5-4"/>
</dbReference>
<dbReference type="ProteomicsDB" id="82614">
    <molecule id="Q9NTI5-5"/>
</dbReference>
<dbReference type="Pumba" id="Q9NTI5"/>
<dbReference type="Antibodypedia" id="22916">
    <property type="antibodies" value="171 antibodies from 29 providers"/>
</dbReference>
<dbReference type="DNASU" id="23047"/>
<dbReference type="Ensembl" id="ENST00000315596.15">
    <molecule id="Q9NTI5-1"/>
    <property type="protein sequence ID" value="ENSP00000313851.10"/>
    <property type="gene ID" value="ENSG00000083642.19"/>
</dbReference>
<dbReference type="Ensembl" id="ENST00000450460.5">
    <molecule id="Q9NTI5-2"/>
    <property type="protein sequence ID" value="ENSP00000401619.1"/>
    <property type="gene ID" value="ENSG00000083642.19"/>
</dbReference>
<dbReference type="GeneID" id="23047"/>
<dbReference type="KEGG" id="hsa:23047"/>
<dbReference type="MANE-Select" id="ENST00000315596.15">
    <property type="protein sequence ID" value="ENSP00000313851.10"/>
    <property type="RefSeq nucleotide sequence ID" value="NM_015032.4"/>
    <property type="RefSeq protein sequence ID" value="NP_055847.1"/>
</dbReference>
<dbReference type="UCSC" id="uc010abf.4">
    <molecule id="Q9NTI5-1"/>
    <property type="organism name" value="human"/>
</dbReference>
<dbReference type="AGR" id="HGNC:20418"/>
<dbReference type="CTD" id="23047"/>
<dbReference type="DisGeNET" id="23047"/>
<dbReference type="GeneCards" id="PDS5B"/>
<dbReference type="HGNC" id="HGNC:20418">
    <property type="gene designation" value="PDS5B"/>
</dbReference>
<dbReference type="HPA" id="ENSG00000083642">
    <property type="expression patterns" value="Low tissue specificity"/>
</dbReference>
<dbReference type="MIM" id="605333">
    <property type="type" value="gene"/>
</dbReference>
<dbReference type="neXtProt" id="NX_Q9NTI5"/>
<dbReference type="OpenTargets" id="ENSG00000083642"/>
<dbReference type="PharmGKB" id="PA162399098"/>
<dbReference type="VEuPathDB" id="HostDB:ENSG00000083642"/>
<dbReference type="eggNOG" id="KOG1525">
    <property type="taxonomic scope" value="Eukaryota"/>
</dbReference>
<dbReference type="GeneTree" id="ENSGT00940000157257"/>
<dbReference type="HOGENOM" id="CLU_004041_0_0_1"/>
<dbReference type="InParanoid" id="Q9NTI5"/>
<dbReference type="OMA" id="YPPAYNM"/>
<dbReference type="OrthoDB" id="200660at2759"/>
<dbReference type="PAN-GO" id="Q9NTI5">
    <property type="GO annotations" value="4 GO annotations based on evolutionary models"/>
</dbReference>
<dbReference type="PhylomeDB" id="Q9NTI5"/>
<dbReference type="TreeFam" id="TF106415"/>
<dbReference type="PathwayCommons" id="Q9NTI5"/>
<dbReference type="Reactome" id="R-HSA-2467813">
    <property type="pathway name" value="Separation of Sister Chromatids"/>
</dbReference>
<dbReference type="Reactome" id="R-HSA-2468052">
    <property type="pathway name" value="Establishment of Sister Chromatid Cohesion"/>
</dbReference>
<dbReference type="Reactome" id="R-HSA-2470946">
    <property type="pathway name" value="Cohesin Loading onto Chromatin"/>
</dbReference>
<dbReference type="Reactome" id="R-HSA-2500257">
    <property type="pathway name" value="Resolution of Sister Chromatid Cohesion"/>
</dbReference>
<dbReference type="SignaLink" id="Q9NTI5"/>
<dbReference type="BioGRID-ORCS" id="23047">
    <property type="hits" value="66 hits in 1171 CRISPR screens"/>
</dbReference>
<dbReference type="CD-CODE" id="DEE660B4">
    <property type="entry name" value="Stress granule"/>
</dbReference>
<dbReference type="ChiTaRS" id="PDS5B">
    <property type="organism name" value="human"/>
</dbReference>
<dbReference type="GeneWiki" id="PDS5B"/>
<dbReference type="GenomeRNAi" id="23047"/>
<dbReference type="Pharos" id="Q9NTI5">
    <property type="development level" value="Tbio"/>
</dbReference>
<dbReference type="PRO" id="PR:Q9NTI5"/>
<dbReference type="Proteomes" id="UP000005640">
    <property type="component" value="Chromosome 13"/>
</dbReference>
<dbReference type="RNAct" id="Q9NTI5">
    <property type="molecule type" value="protein"/>
</dbReference>
<dbReference type="Bgee" id="ENSG00000083642">
    <property type="expression patterns" value="Expressed in calcaneal tendon and 206 other cell types or tissues"/>
</dbReference>
<dbReference type="ExpressionAtlas" id="Q9NTI5">
    <property type="expression patterns" value="baseline and differential"/>
</dbReference>
<dbReference type="GO" id="GO:0000785">
    <property type="term" value="C:chromatin"/>
    <property type="evidence" value="ECO:0000314"/>
    <property type="project" value="UniProtKB"/>
</dbReference>
<dbReference type="GO" id="GO:0005694">
    <property type="term" value="C:chromosome"/>
    <property type="evidence" value="ECO:0000304"/>
    <property type="project" value="Reactome"/>
</dbReference>
<dbReference type="GO" id="GO:0000775">
    <property type="term" value="C:chromosome, centromeric region"/>
    <property type="evidence" value="ECO:0000304"/>
    <property type="project" value="Reactome"/>
</dbReference>
<dbReference type="GO" id="GO:0005829">
    <property type="term" value="C:cytosol"/>
    <property type="evidence" value="ECO:0000304"/>
    <property type="project" value="Reactome"/>
</dbReference>
<dbReference type="GO" id="GO:0005654">
    <property type="term" value="C:nucleoplasm"/>
    <property type="evidence" value="ECO:0000314"/>
    <property type="project" value="HPA"/>
</dbReference>
<dbReference type="GO" id="GO:0005634">
    <property type="term" value="C:nucleus"/>
    <property type="evidence" value="ECO:0000250"/>
    <property type="project" value="UniProtKB"/>
</dbReference>
<dbReference type="GO" id="GO:0003677">
    <property type="term" value="F:DNA binding"/>
    <property type="evidence" value="ECO:0000314"/>
    <property type="project" value="MGI"/>
</dbReference>
<dbReference type="GO" id="GO:0051301">
    <property type="term" value="P:cell division"/>
    <property type="evidence" value="ECO:0007669"/>
    <property type="project" value="UniProtKB-KW"/>
</dbReference>
<dbReference type="GO" id="GO:0008283">
    <property type="term" value="P:cell population proliferation"/>
    <property type="evidence" value="ECO:0000304"/>
    <property type="project" value="ProtInc"/>
</dbReference>
<dbReference type="GO" id="GO:0006281">
    <property type="term" value="P:DNA repair"/>
    <property type="evidence" value="ECO:0000318"/>
    <property type="project" value="GO_Central"/>
</dbReference>
<dbReference type="GO" id="GO:0007064">
    <property type="term" value="P:mitotic sister chromatid cohesion"/>
    <property type="evidence" value="ECO:0000315"/>
    <property type="project" value="UniProtKB"/>
</dbReference>
<dbReference type="GO" id="GO:0008285">
    <property type="term" value="P:negative regulation of cell population proliferation"/>
    <property type="evidence" value="ECO:0000314"/>
    <property type="project" value="UniProtKB"/>
</dbReference>
<dbReference type="GO" id="GO:0042127">
    <property type="term" value="P:regulation of cell population proliferation"/>
    <property type="evidence" value="ECO:0000314"/>
    <property type="project" value="MGI"/>
</dbReference>
<dbReference type="CDD" id="cd19953">
    <property type="entry name" value="PDS5"/>
    <property type="match status" value="1"/>
</dbReference>
<dbReference type="FunFam" id="1.25.10.10:FF:001146">
    <property type="entry name" value="PDS5 cohesin associated factor B"/>
    <property type="match status" value="1"/>
</dbReference>
<dbReference type="FunFam" id="1.25.10.10:FF:000064">
    <property type="entry name" value="Sister chromatid cohesion protein PDS5 homolog A"/>
    <property type="match status" value="1"/>
</dbReference>
<dbReference type="Gene3D" id="1.25.10.10">
    <property type="entry name" value="Leucine-rich Repeat Variant"/>
    <property type="match status" value="2"/>
</dbReference>
<dbReference type="InterPro" id="IPR011989">
    <property type="entry name" value="ARM-like"/>
</dbReference>
<dbReference type="InterPro" id="IPR016024">
    <property type="entry name" value="ARM-type_fold"/>
</dbReference>
<dbReference type="InterPro" id="IPR039776">
    <property type="entry name" value="Pds5"/>
</dbReference>
<dbReference type="PANTHER" id="PTHR12663">
    <property type="entry name" value="ANDROGEN INDUCED INHIBITOR OF PROLIFERATION AS3 / PDS5-RELATED"/>
    <property type="match status" value="1"/>
</dbReference>
<dbReference type="PANTHER" id="PTHR12663:SF1">
    <property type="entry name" value="SISTER CHROMATID COHESION PROTEIN PDS5 HOMOLOG B"/>
    <property type="match status" value="1"/>
</dbReference>
<dbReference type="Pfam" id="PF20168">
    <property type="entry name" value="PDS5"/>
    <property type="match status" value="1"/>
</dbReference>
<dbReference type="SUPFAM" id="SSF48371">
    <property type="entry name" value="ARM repeat"/>
    <property type="match status" value="1"/>
</dbReference>
<comment type="function">
    <text evidence="7 10 11">Regulator of sister chromatid cohesion in mitosis which may stabilize cohesin complex association with chromatin. May couple sister chromatid cohesion during mitosis to DNA replication. Cohesion ensures that chromosome partitioning is accurate in both meiotic and mitotic cells and plays an important role in DNA repair. Plays a role in androgen-induced proliferative arrest in prostate cells.</text>
</comment>
<comment type="subunit">
    <text evidence="17 18 19">Interacts with the cohesin complex. Interacts with RAD21; the interaction is direct. Interacts with WAPL (via FGF motifs) or CDCA5 (via the FGF motif); the interaction is direct, cohesin-dependent and competitive (Probable).</text>
</comment>
<comment type="interaction">
    <interactant intactId="EBI-1175604">
        <id>Q9NTI5</id>
    </interactant>
    <interactant intactId="EBI-79792">
        <id>P51587</id>
        <label>BRCA2</label>
    </interactant>
    <organismsDiffer>false</organismsDiffer>
    <experiments>26</experiments>
</comment>
<comment type="interaction">
    <interactant intactId="EBI-1175604">
        <id>Q9NTI5</id>
    </interactant>
    <interactant intactId="EBI-80739">
        <id>O60216</id>
        <label>RAD21</label>
    </interactant>
    <organismsDiffer>false</organismsDiffer>
    <experiments>5</experiments>
</comment>
<comment type="interaction">
    <interactant intactId="EBI-1175604">
        <id>Q9NTI5</id>
    </interactant>
    <interactant intactId="EBI-80718">
        <id>Q9UQE7</id>
        <label>SMC3</label>
    </interactant>
    <organismsDiffer>false</organismsDiffer>
    <experiments>7</experiments>
</comment>
<comment type="interaction">
    <interactant intactId="EBI-1175604">
        <id>Q9NTI5</id>
    </interactant>
    <interactant intactId="EBI-1175097">
        <id>Q8WVM7</id>
        <label>STAG1</label>
    </interactant>
    <organismsDiffer>false</organismsDiffer>
    <experiments>4</experiments>
</comment>
<comment type="interaction">
    <interactant intactId="EBI-1175604">
        <id>Q9NTI5</id>
    </interactant>
    <interactant intactId="EBI-1057252">
        <id>Q8N3U4</id>
        <label>STAG2</label>
    </interactant>
    <organismsDiffer>false</organismsDiffer>
    <experiments>4</experiments>
</comment>
<comment type="interaction">
    <interactant intactId="EBI-1175604">
        <id>Q9NTI5</id>
    </interactant>
    <interactant intactId="EBI-5281637">
        <id>Q6NVH7</id>
        <label>SWSAP1</label>
    </interactant>
    <organismsDiffer>false</organismsDiffer>
    <experiments>2</experiments>
</comment>
<comment type="interaction">
    <interactant intactId="EBI-1175604">
        <id>Q9NTI5</id>
    </interactant>
    <interactant intactId="EBI-1022242">
        <id>Q7Z5K2</id>
        <label>WAPL</label>
    </interactant>
    <organismsDiffer>false</organismsDiffer>
    <experiments>9</experiments>
</comment>
<comment type="subcellular location">
    <subcellularLocation>
        <location evidence="2">Nucleus</location>
    </subcellularLocation>
</comment>
<comment type="alternative products">
    <event type="alternative splicing"/>
    <isoform>
        <id>Q9NTI5-1</id>
        <name evidence="6">1</name>
        <sequence type="displayed"/>
    </isoform>
    <isoform>
        <id>Q9NTI5-2</id>
        <name evidence="5">2</name>
        <sequence type="described" ref="VSP_052402"/>
    </isoform>
    <isoform>
        <id>Q9NTI5-3</id>
        <name evidence="9">3</name>
        <sequence type="described" ref="VSP_052399 VSP_052400"/>
    </isoform>
    <isoform>
        <id>Q9NTI5-4</id>
        <name evidence="9">4</name>
        <sequence type="described" ref="VSP_052397 VSP_052398"/>
    </isoform>
    <isoform>
        <id>Q9NTI5-5</id>
        <name evidence="8">5</name>
        <sequence type="described" ref="VSP_052396 VSP_052401"/>
    </isoform>
</comment>
<comment type="tissue specificity">
    <text evidence="12">Widely expressed.</text>
</comment>
<comment type="induction">
    <text evidence="12">By the synthetic androgen R1881 in prostate carcinoma cells undergoing proliferative arrest. Maximum levels occur 18-20 hours after androgen exposure.</text>
</comment>
<comment type="similarity">
    <text evidence="16">Belongs to the PDS5 family.</text>
</comment>
<comment type="sequence caution" evidence="16">
    <conflict type="erroneous initiation">
        <sequence resource="EMBL-CDS" id="BAA76823"/>
    </conflict>
</comment>
<sequence length="1447" mass="164667">MAHSKTRTNDGKITYPPGVKEISDKISKEEMVRRLKMVVKTFMDMDQDSEEEKELYLNLALHLASDFFLKHPDKDVRLLVACCLADIFRIYAPEAPYTSPDKLKDIFMFITRQLKGLEDTKSPQFNRYFYLLENIAWVKSYNICFELEDSNEIFTQLYRTLFSVINNGHNQKVHMHMVDLMSSIICEGDTVSQELLDTVLVNLVPAHKNLNKQAYDLAKALLKRTAQAIEPYITNFFNQVLMLGKTSISDLSEHVFDLILELYNIDSHLLLSVLPQLEFKLKSNDNEERLQVVKLLAKMFGAKDSELASQNKPLWQCYLGRFNDIHVPIRLECVKFASHCLMNHPDLAKDLTEYLKVRSHDPEEAIRHDVIVSIVTAAKKDILLVNDHLLNFVRERTLDKRWRVRKEAMMGLAQIYKKYALQSAAGKDAAKQIAWIKDKLLHIYYQNSIDDRLLVERIFAQYMVPHNLETTERMKCLYYLYATLDLNAVKALNEMWKCQNLLRHQVKDLLDLIKQPKTDASVKAIFSKVMVITRNLPDPGKAQDFMKKFTQVLEDDEKIRKQLEVLVSPTCSCKQAEGCVREITKKLGNPKQPTNPFLEMIKFLLERIAPVHIDTESISALIKQVNKSIDGTADDEDEGVPTDQAIRAGLELLKVLSFTHPISFHSAETFESLLACLKMDDEKVAEAALQIFKNTGSKIEEDFPHIRSALLPVLHHKSKKGPPRQAKYAIHCIHAIFSSKETQFAQIFEPLHKSLDPSNLEHLITPLVTIGHIALLAPDQFAAPLKSLVATFIVKDLLMNDRLPGKKTTKLWVPDEEVSPETMVKIQAIKMMVRWLLGMKNNHSKSGTSTLRLLTTILHSDGDLTEQGKISKPDMSRLRLAAGSAIVKLAQEPCYHEIITLEQYQLCALAINDECYQVRQVFAQKLHKGLSRLRLPLEYMAICALCAKDPVKERRAHARQCLVKNINVRREYLKQHAAVSEKLLSLLPEYVVPYTIHLLAHDPDYVKVQDIEQLKDVKECLWFVLEILMAKNENNSHAFIRKMVENIKQTKDAQGPDDAKMNEKLYTVCDVAMNIIMSKSTTYSLESPKDPVLPARFFTQPDKNFSNTKNYLPPEMKSFFTPGKPKTTNVLGAVNKPLSSAGKQSQTKSSRMETVSNASSSSNPSSPGRIKGRLDSSEMDHSENEDYTMSSPLPGKKSDKRDDSDLVRSELEKPRGRKKTPVTEQEEKLGMDDLTKLVQEQKPKGSQRSRKRGHTASESDEQQWPEEKRLKEDILENEDEQNSPPKKGKRGRPPKPLGGGTPKEEPTMKTSKKGSKKKSGPPAPEEEEEEERQSGNTEQKSKSKQHRVSRRAQQRAESPESSAIESTQSTPQKGRGRPSKTPSPSQPKKNVRVGRSKQAATKENDSSEEVDVFQGSSPVDDIPQEETEEEEVSTVNVRRRSAKRERR</sequence>
<name>PDS5B_HUMAN</name>